<dbReference type="EC" id="2.5.1.75" evidence="1"/>
<dbReference type="EMBL" id="CP000628">
    <property type="protein sequence ID" value="ACM26976.1"/>
    <property type="status" value="ALT_INIT"/>
    <property type="molecule type" value="Genomic_DNA"/>
</dbReference>
<dbReference type="RefSeq" id="WP_034517985.1">
    <property type="nucleotide sequence ID" value="NC_011985.1"/>
</dbReference>
<dbReference type="SMR" id="B9JGK2"/>
<dbReference type="STRING" id="311403.Arad_2901"/>
<dbReference type="KEGG" id="ara:Arad_2901"/>
<dbReference type="eggNOG" id="COG0324">
    <property type="taxonomic scope" value="Bacteria"/>
</dbReference>
<dbReference type="HOGENOM" id="CLU_032616_0_1_5"/>
<dbReference type="Proteomes" id="UP000001600">
    <property type="component" value="Chromosome 1"/>
</dbReference>
<dbReference type="GO" id="GO:0005524">
    <property type="term" value="F:ATP binding"/>
    <property type="evidence" value="ECO:0007669"/>
    <property type="project" value="UniProtKB-UniRule"/>
</dbReference>
<dbReference type="GO" id="GO:0052381">
    <property type="term" value="F:tRNA dimethylallyltransferase activity"/>
    <property type="evidence" value="ECO:0007669"/>
    <property type="project" value="UniProtKB-UniRule"/>
</dbReference>
<dbReference type="GO" id="GO:0006400">
    <property type="term" value="P:tRNA modification"/>
    <property type="evidence" value="ECO:0007669"/>
    <property type="project" value="TreeGrafter"/>
</dbReference>
<dbReference type="Gene3D" id="1.10.20.140">
    <property type="match status" value="1"/>
</dbReference>
<dbReference type="Gene3D" id="1.10.287.890">
    <property type="entry name" value="Crystal structure of tRNA isopentenylpyrophosphate transferase (bh2366) domain"/>
    <property type="match status" value="1"/>
</dbReference>
<dbReference type="Gene3D" id="3.40.50.300">
    <property type="entry name" value="P-loop containing nucleotide triphosphate hydrolases"/>
    <property type="match status" value="1"/>
</dbReference>
<dbReference type="HAMAP" id="MF_00185">
    <property type="entry name" value="IPP_trans"/>
    <property type="match status" value="1"/>
</dbReference>
<dbReference type="InterPro" id="IPR039657">
    <property type="entry name" value="Dimethylallyltransferase"/>
</dbReference>
<dbReference type="InterPro" id="IPR018022">
    <property type="entry name" value="IPT"/>
</dbReference>
<dbReference type="InterPro" id="IPR027417">
    <property type="entry name" value="P-loop_NTPase"/>
</dbReference>
<dbReference type="NCBIfam" id="TIGR00174">
    <property type="entry name" value="miaA"/>
    <property type="match status" value="1"/>
</dbReference>
<dbReference type="PANTHER" id="PTHR11088">
    <property type="entry name" value="TRNA DIMETHYLALLYLTRANSFERASE"/>
    <property type="match status" value="1"/>
</dbReference>
<dbReference type="PANTHER" id="PTHR11088:SF60">
    <property type="entry name" value="TRNA DIMETHYLALLYLTRANSFERASE"/>
    <property type="match status" value="1"/>
</dbReference>
<dbReference type="Pfam" id="PF01715">
    <property type="entry name" value="IPPT"/>
    <property type="match status" value="1"/>
</dbReference>
<dbReference type="SUPFAM" id="SSF52540">
    <property type="entry name" value="P-loop containing nucleoside triphosphate hydrolases"/>
    <property type="match status" value="2"/>
</dbReference>
<comment type="function">
    <text evidence="1">Catalyzes the transfer of a dimethylallyl group onto the adenine at position 37 in tRNAs that read codons beginning with uridine, leading to the formation of N6-(dimethylallyl)adenosine (i(6)A).</text>
</comment>
<comment type="catalytic activity">
    <reaction evidence="1">
        <text>adenosine(37) in tRNA + dimethylallyl diphosphate = N(6)-dimethylallyladenosine(37) in tRNA + diphosphate</text>
        <dbReference type="Rhea" id="RHEA:26482"/>
        <dbReference type="Rhea" id="RHEA-COMP:10162"/>
        <dbReference type="Rhea" id="RHEA-COMP:10375"/>
        <dbReference type="ChEBI" id="CHEBI:33019"/>
        <dbReference type="ChEBI" id="CHEBI:57623"/>
        <dbReference type="ChEBI" id="CHEBI:74411"/>
        <dbReference type="ChEBI" id="CHEBI:74415"/>
        <dbReference type="EC" id="2.5.1.75"/>
    </reaction>
</comment>
<comment type="cofactor">
    <cofactor evidence="1">
        <name>Mg(2+)</name>
        <dbReference type="ChEBI" id="CHEBI:18420"/>
    </cofactor>
</comment>
<comment type="subunit">
    <text evidence="1">Monomer.</text>
</comment>
<comment type="similarity">
    <text evidence="1">Belongs to the IPP transferase family.</text>
</comment>
<comment type="sequence caution" evidence="2">
    <conflict type="erroneous initiation">
        <sequence resource="EMBL-CDS" id="ACM26976"/>
    </conflict>
</comment>
<name>MIAA_RHIR8</name>
<accession>B9JGK2</accession>
<evidence type="ECO:0000255" key="1">
    <source>
        <dbReference type="HAMAP-Rule" id="MF_00185"/>
    </source>
</evidence>
<evidence type="ECO:0000305" key="2"/>
<keyword id="KW-0067">ATP-binding</keyword>
<keyword id="KW-0460">Magnesium</keyword>
<keyword id="KW-0547">Nucleotide-binding</keyword>
<keyword id="KW-0808">Transferase</keyword>
<keyword id="KW-0819">tRNA processing</keyword>
<feature type="chain" id="PRO_0000377054" description="tRNA dimethylallyltransferase">
    <location>
        <begin position="1"/>
        <end position="298"/>
    </location>
</feature>
<feature type="region of interest" description="Interaction with substrate tRNA" evidence="1">
    <location>
        <begin position="41"/>
        <end position="44"/>
    </location>
</feature>
<feature type="region of interest" description="Interaction with substrate tRNA" evidence="1">
    <location>
        <begin position="165"/>
        <end position="169"/>
    </location>
</feature>
<feature type="binding site" evidence="1">
    <location>
        <begin position="16"/>
        <end position="23"/>
    </location>
    <ligand>
        <name>ATP</name>
        <dbReference type="ChEBI" id="CHEBI:30616"/>
    </ligand>
</feature>
<feature type="binding site" evidence="1">
    <location>
        <begin position="18"/>
        <end position="23"/>
    </location>
    <ligand>
        <name>substrate</name>
    </ligand>
</feature>
<feature type="site" description="Interaction with substrate tRNA" evidence="1">
    <location>
        <position position="107"/>
    </location>
</feature>
<feature type="site" description="Interaction with substrate tRNA" evidence="1">
    <location>
        <position position="129"/>
    </location>
</feature>
<reference key="1">
    <citation type="journal article" date="2009" name="J. Bacteriol.">
        <title>Genome sequences of three Agrobacterium biovars help elucidate the evolution of multichromosome genomes in bacteria.</title>
        <authorList>
            <person name="Slater S.C."/>
            <person name="Goldman B.S."/>
            <person name="Goodner B."/>
            <person name="Setubal J.C."/>
            <person name="Farrand S.K."/>
            <person name="Nester E.W."/>
            <person name="Burr T.J."/>
            <person name="Banta L."/>
            <person name="Dickerman A.W."/>
            <person name="Paulsen I."/>
            <person name="Otten L."/>
            <person name="Suen G."/>
            <person name="Welch R."/>
            <person name="Almeida N.F."/>
            <person name="Arnold F."/>
            <person name="Burton O.T."/>
            <person name="Du Z."/>
            <person name="Ewing A."/>
            <person name="Godsy E."/>
            <person name="Heisel S."/>
            <person name="Houmiel K.L."/>
            <person name="Jhaveri J."/>
            <person name="Lu J."/>
            <person name="Miller N.M."/>
            <person name="Norton S."/>
            <person name="Chen Q."/>
            <person name="Phoolcharoen W."/>
            <person name="Ohlin V."/>
            <person name="Ondrusek D."/>
            <person name="Pride N."/>
            <person name="Stricklin S.L."/>
            <person name="Sun J."/>
            <person name="Wheeler C."/>
            <person name="Wilson L."/>
            <person name="Zhu H."/>
            <person name="Wood D.W."/>
        </authorList>
    </citation>
    <scope>NUCLEOTIDE SEQUENCE [LARGE SCALE GENOMIC DNA]</scope>
    <source>
        <strain>K84 / ATCC BAA-868</strain>
    </source>
</reference>
<gene>
    <name evidence="1" type="primary">miaA</name>
    <name type="ordered locus">Arad_2901</name>
</gene>
<organism>
    <name type="scientific">Rhizobium rhizogenes (strain K84 / ATCC BAA-868)</name>
    <name type="common">Agrobacterium radiobacter</name>
    <dbReference type="NCBI Taxonomy" id="311403"/>
    <lineage>
        <taxon>Bacteria</taxon>
        <taxon>Pseudomonadati</taxon>
        <taxon>Pseudomonadota</taxon>
        <taxon>Alphaproteobacteria</taxon>
        <taxon>Hyphomicrobiales</taxon>
        <taxon>Rhizobiaceae</taxon>
        <taxon>Rhizobium/Agrobacterium group</taxon>
        <taxon>Rhizobium</taxon>
    </lineage>
</organism>
<sequence length="298" mass="32338">MIRNPMSDIDAILITGPTASGKSALAVELARAHDGVVVNADSMQVYDTLSVLTARPSETDMEGIPHHLYGHVPAGQAYSTGVWLREAAALVAQLREEGRTPVFVGGTGLYFKALTGGLSDMPDIPTEIRSRLRERLLAEGTDELYRELVLCDPTAAESLSSQDGQRIVRALEVIEATGQSIAAFQGKTGPVIIDADRARKIVVLPDRAVLHQRINGRFEKMLAMGAEAEVKALLALGLSPEMPVMKAIGVSQIAAMLRGEMTRAEVLDTGAAATRQYAKRQMTWFRNQMDESWERVSP</sequence>
<protein>
    <recommendedName>
        <fullName evidence="1">tRNA dimethylallyltransferase</fullName>
        <ecNumber evidence="1">2.5.1.75</ecNumber>
    </recommendedName>
    <alternativeName>
        <fullName evidence="1">Dimethylallyl diphosphate:tRNA dimethylallyltransferase</fullName>
        <shortName evidence="1">DMAPP:tRNA dimethylallyltransferase</shortName>
        <shortName evidence="1">DMATase</shortName>
    </alternativeName>
    <alternativeName>
        <fullName evidence="1">Isopentenyl-diphosphate:tRNA isopentenyltransferase</fullName>
        <shortName evidence="1">IPP transferase</shortName>
        <shortName evidence="1">IPPT</shortName>
        <shortName evidence="1">IPTase</shortName>
    </alternativeName>
</protein>
<proteinExistence type="inferred from homology"/>